<protein>
    <recommendedName>
        <fullName evidence="1">Chaperone protein HtpG</fullName>
    </recommendedName>
    <alternativeName>
        <fullName evidence="1">Heat shock protein HtpG</fullName>
    </alternativeName>
    <alternativeName>
        <fullName evidence="1">High temperature protein G</fullName>
    </alternativeName>
</protein>
<accession>Q63W07</accession>
<dbReference type="EMBL" id="BX571965">
    <property type="protein sequence ID" value="CAH35081.1"/>
    <property type="molecule type" value="Genomic_DNA"/>
</dbReference>
<dbReference type="RefSeq" id="WP_004185742.1">
    <property type="nucleotide sequence ID" value="NZ_CP009538.1"/>
</dbReference>
<dbReference type="RefSeq" id="YP_107709.1">
    <property type="nucleotide sequence ID" value="NC_006350.1"/>
</dbReference>
<dbReference type="SMR" id="Q63W07"/>
<dbReference type="STRING" id="272560.BPSL1087"/>
<dbReference type="GeneID" id="93059584"/>
<dbReference type="KEGG" id="bps:BPSL1087"/>
<dbReference type="PATRIC" id="fig|272560.51.peg.471"/>
<dbReference type="eggNOG" id="COG0326">
    <property type="taxonomic scope" value="Bacteria"/>
</dbReference>
<dbReference type="Proteomes" id="UP000000605">
    <property type="component" value="Chromosome 1"/>
</dbReference>
<dbReference type="GO" id="GO:0005737">
    <property type="term" value="C:cytoplasm"/>
    <property type="evidence" value="ECO:0007669"/>
    <property type="project" value="UniProtKB-SubCell"/>
</dbReference>
<dbReference type="GO" id="GO:0005524">
    <property type="term" value="F:ATP binding"/>
    <property type="evidence" value="ECO:0007669"/>
    <property type="project" value="UniProtKB-UniRule"/>
</dbReference>
<dbReference type="GO" id="GO:0016887">
    <property type="term" value="F:ATP hydrolysis activity"/>
    <property type="evidence" value="ECO:0007669"/>
    <property type="project" value="InterPro"/>
</dbReference>
<dbReference type="GO" id="GO:0140662">
    <property type="term" value="F:ATP-dependent protein folding chaperone"/>
    <property type="evidence" value="ECO:0007669"/>
    <property type="project" value="InterPro"/>
</dbReference>
<dbReference type="GO" id="GO:0051082">
    <property type="term" value="F:unfolded protein binding"/>
    <property type="evidence" value="ECO:0007669"/>
    <property type="project" value="UniProtKB-UniRule"/>
</dbReference>
<dbReference type="CDD" id="cd16927">
    <property type="entry name" value="HATPase_Hsp90-like"/>
    <property type="match status" value="1"/>
</dbReference>
<dbReference type="FunFam" id="3.30.230.80:FF:000002">
    <property type="entry name" value="Molecular chaperone HtpG"/>
    <property type="match status" value="1"/>
</dbReference>
<dbReference type="FunFam" id="3.30.565.10:FF:000009">
    <property type="entry name" value="Molecular chaperone HtpG"/>
    <property type="match status" value="1"/>
</dbReference>
<dbReference type="Gene3D" id="3.30.230.80">
    <property type="match status" value="1"/>
</dbReference>
<dbReference type="Gene3D" id="3.40.50.11260">
    <property type="match status" value="1"/>
</dbReference>
<dbReference type="Gene3D" id="1.20.120.790">
    <property type="entry name" value="Heat shock protein 90, C-terminal domain"/>
    <property type="match status" value="1"/>
</dbReference>
<dbReference type="Gene3D" id="3.30.565.10">
    <property type="entry name" value="Histidine kinase-like ATPase, C-terminal domain"/>
    <property type="match status" value="1"/>
</dbReference>
<dbReference type="HAMAP" id="MF_00505">
    <property type="entry name" value="HSP90"/>
    <property type="match status" value="1"/>
</dbReference>
<dbReference type="InterPro" id="IPR036890">
    <property type="entry name" value="HATPase_C_sf"/>
</dbReference>
<dbReference type="InterPro" id="IPR019805">
    <property type="entry name" value="Heat_shock_protein_90_CS"/>
</dbReference>
<dbReference type="InterPro" id="IPR037196">
    <property type="entry name" value="HSP90_C"/>
</dbReference>
<dbReference type="InterPro" id="IPR001404">
    <property type="entry name" value="Hsp90_fam"/>
</dbReference>
<dbReference type="InterPro" id="IPR020575">
    <property type="entry name" value="Hsp90_N"/>
</dbReference>
<dbReference type="InterPro" id="IPR020568">
    <property type="entry name" value="Ribosomal_Su5_D2-typ_SF"/>
</dbReference>
<dbReference type="NCBIfam" id="NF003555">
    <property type="entry name" value="PRK05218.1"/>
    <property type="match status" value="1"/>
</dbReference>
<dbReference type="PANTHER" id="PTHR11528">
    <property type="entry name" value="HEAT SHOCK PROTEIN 90 FAMILY MEMBER"/>
    <property type="match status" value="1"/>
</dbReference>
<dbReference type="Pfam" id="PF13589">
    <property type="entry name" value="HATPase_c_3"/>
    <property type="match status" value="1"/>
</dbReference>
<dbReference type="Pfam" id="PF00183">
    <property type="entry name" value="HSP90"/>
    <property type="match status" value="1"/>
</dbReference>
<dbReference type="PIRSF" id="PIRSF002583">
    <property type="entry name" value="Hsp90"/>
    <property type="match status" value="1"/>
</dbReference>
<dbReference type="PRINTS" id="PR00775">
    <property type="entry name" value="HEATSHOCK90"/>
</dbReference>
<dbReference type="SMART" id="SM00387">
    <property type="entry name" value="HATPase_c"/>
    <property type="match status" value="1"/>
</dbReference>
<dbReference type="SUPFAM" id="SSF55874">
    <property type="entry name" value="ATPase domain of HSP90 chaperone/DNA topoisomerase II/histidine kinase"/>
    <property type="match status" value="1"/>
</dbReference>
<dbReference type="SUPFAM" id="SSF110942">
    <property type="entry name" value="HSP90 C-terminal domain"/>
    <property type="match status" value="1"/>
</dbReference>
<dbReference type="SUPFAM" id="SSF54211">
    <property type="entry name" value="Ribosomal protein S5 domain 2-like"/>
    <property type="match status" value="1"/>
</dbReference>
<dbReference type="PROSITE" id="PS00298">
    <property type="entry name" value="HSP90"/>
    <property type="match status" value="1"/>
</dbReference>
<organism>
    <name type="scientific">Burkholderia pseudomallei (strain K96243)</name>
    <dbReference type="NCBI Taxonomy" id="272560"/>
    <lineage>
        <taxon>Bacteria</taxon>
        <taxon>Pseudomonadati</taxon>
        <taxon>Pseudomonadota</taxon>
        <taxon>Betaproteobacteria</taxon>
        <taxon>Burkholderiales</taxon>
        <taxon>Burkholderiaceae</taxon>
        <taxon>Burkholderia</taxon>
        <taxon>pseudomallei group</taxon>
    </lineage>
</organism>
<reference key="1">
    <citation type="journal article" date="2004" name="Proc. Natl. Acad. Sci. U.S.A.">
        <title>Genomic plasticity of the causative agent of melioidosis, Burkholderia pseudomallei.</title>
        <authorList>
            <person name="Holden M.T.G."/>
            <person name="Titball R.W."/>
            <person name="Peacock S.J."/>
            <person name="Cerdeno-Tarraga A.-M."/>
            <person name="Atkins T."/>
            <person name="Crossman L.C."/>
            <person name="Pitt T."/>
            <person name="Churcher C."/>
            <person name="Mungall K.L."/>
            <person name="Bentley S.D."/>
            <person name="Sebaihia M."/>
            <person name="Thomson N.R."/>
            <person name="Bason N."/>
            <person name="Beacham I.R."/>
            <person name="Brooks K."/>
            <person name="Brown K.A."/>
            <person name="Brown N.F."/>
            <person name="Challis G.L."/>
            <person name="Cherevach I."/>
            <person name="Chillingworth T."/>
            <person name="Cronin A."/>
            <person name="Crossett B."/>
            <person name="Davis P."/>
            <person name="DeShazer D."/>
            <person name="Feltwell T."/>
            <person name="Fraser A."/>
            <person name="Hance Z."/>
            <person name="Hauser H."/>
            <person name="Holroyd S."/>
            <person name="Jagels K."/>
            <person name="Keith K.E."/>
            <person name="Maddison M."/>
            <person name="Moule S."/>
            <person name="Price C."/>
            <person name="Quail M.A."/>
            <person name="Rabbinowitsch E."/>
            <person name="Rutherford K."/>
            <person name="Sanders M."/>
            <person name="Simmonds M."/>
            <person name="Songsivilai S."/>
            <person name="Stevens K."/>
            <person name="Tumapa S."/>
            <person name="Vesaratchavest M."/>
            <person name="Whitehead S."/>
            <person name="Yeats C."/>
            <person name="Barrell B.G."/>
            <person name="Oyston P.C.F."/>
            <person name="Parkhill J."/>
        </authorList>
    </citation>
    <scope>NUCLEOTIDE SEQUENCE [LARGE SCALE GENOMIC DNA]</scope>
    <source>
        <strain>K96243</strain>
    </source>
</reference>
<comment type="function">
    <text evidence="1">Molecular chaperone. Has ATPase activity.</text>
</comment>
<comment type="subunit">
    <text evidence="1">Homodimer.</text>
</comment>
<comment type="subcellular location">
    <subcellularLocation>
        <location evidence="1">Cytoplasm</location>
    </subcellularLocation>
</comment>
<comment type="similarity">
    <text evidence="1">Belongs to the heat shock protein 90 family.</text>
</comment>
<keyword id="KW-0067">ATP-binding</keyword>
<keyword id="KW-0143">Chaperone</keyword>
<keyword id="KW-0963">Cytoplasm</keyword>
<keyword id="KW-0547">Nucleotide-binding</keyword>
<keyword id="KW-1185">Reference proteome</keyword>
<keyword id="KW-0346">Stress response</keyword>
<gene>
    <name evidence="1" type="primary">htpG</name>
    <name type="ordered locus">BPSL1087</name>
</gene>
<name>HTPG_BURPS</name>
<feature type="chain" id="PRO_0000224200" description="Chaperone protein HtpG">
    <location>
        <begin position="1"/>
        <end position="632"/>
    </location>
</feature>
<feature type="region of interest" description="A; substrate-binding" evidence="1">
    <location>
        <begin position="1"/>
        <end position="339"/>
    </location>
</feature>
<feature type="region of interest" description="B" evidence="1">
    <location>
        <begin position="340"/>
        <end position="559"/>
    </location>
</feature>
<feature type="region of interest" description="C" evidence="1">
    <location>
        <begin position="560"/>
        <end position="632"/>
    </location>
</feature>
<evidence type="ECO:0000255" key="1">
    <source>
        <dbReference type="HAMAP-Rule" id="MF_00505"/>
    </source>
</evidence>
<proteinExistence type="inferred from homology"/>
<sequence length="632" mass="71149">MTQQTMSFQAEVKQLLHLMIHSLYSNKEIFLRELVSNASDAADKLRFEALENNALYESDPNLRIRLSFDKAARTITIDDNGIGMSRDEAIANLGTIARSGTKEFFSKLSGDQQKDAALIGQFGVGFYSGFIVADRITVETRRAGLPASEGVRWESAGEGDFQVDTIERAARGTTITLHLREGEDELLSSYRLKSIVQKYSDHVALPILMKKEEWDQEKGEMVEKDEDETINQASALWTRAKSEVTDEQYKQFYQHVAHDHQDPLAWTHNRVEGRSEYTQLLFVPSHAPFDLWNRDYRGGLKLYVKRVFIMDDAEQLLPQYLRFIKGVVDSSDLPLNVSREILQESRDVKAIREGVTKRALSMLEELANAEDDAGKEKYKTFWSAFGQVLKEGVGEDHANRERVAKLLRFASTHGDTDAQDVALADYVARMKPEQTKIYYVTADTWQAAKNSPHLEVFRKKGVEVLLLTDRVDEWMLSFLHEFDGKPLASVARGDLDLGALNDDEKKAQEETGEAMKPVVDKMKETLGEKVKDVRVTFRLTDSPSCLVADDNDMSGYLQRMLKAAGQSAPSFQPILEINPEHPLVKALKADGADFGDWCHLLFDQALLAEGGALEDPASFVKRTNALLLSRAA</sequence>